<accession>P40249</accession>
<keyword id="KW-0034">Amyloid</keyword>
<keyword id="KW-1003">Cell membrane</keyword>
<keyword id="KW-0186">Copper</keyword>
<keyword id="KW-1015">Disulfide bond</keyword>
<keyword id="KW-0325">Glycoprotein</keyword>
<keyword id="KW-0333">Golgi apparatus</keyword>
<keyword id="KW-0336">GPI-anchor</keyword>
<keyword id="KW-0449">Lipoprotein</keyword>
<keyword id="KW-0472">Membrane</keyword>
<keyword id="KW-0479">Metal-binding</keyword>
<keyword id="KW-0640">Prion</keyword>
<keyword id="KW-1185">Reference proteome</keyword>
<keyword id="KW-0677">Repeat</keyword>
<keyword id="KW-0732">Signal</keyword>
<keyword id="KW-0862">Zinc</keyword>
<organism>
    <name type="scientific">Sapajus apella</name>
    <name type="common">Brown-capped capuchin</name>
    <name type="synonym">Cebus apella</name>
    <dbReference type="NCBI Taxonomy" id="9515"/>
    <lineage>
        <taxon>Eukaryota</taxon>
        <taxon>Metazoa</taxon>
        <taxon>Chordata</taxon>
        <taxon>Craniata</taxon>
        <taxon>Vertebrata</taxon>
        <taxon>Euteleostomi</taxon>
        <taxon>Mammalia</taxon>
        <taxon>Eutheria</taxon>
        <taxon>Euarchontoglires</taxon>
        <taxon>Primates</taxon>
        <taxon>Haplorrhini</taxon>
        <taxon>Platyrrhini</taxon>
        <taxon>Cebidae</taxon>
        <taxon>Cebinae</taxon>
        <taxon>Sapajus</taxon>
    </lineage>
</organism>
<evidence type="ECO:0000250" key="1"/>
<evidence type="ECO:0000250" key="2">
    <source>
        <dbReference type="UniProtKB" id="P04156"/>
    </source>
</evidence>
<evidence type="ECO:0000250" key="3">
    <source>
        <dbReference type="UniProtKB" id="P04273"/>
    </source>
</evidence>
<evidence type="ECO:0000250" key="4">
    <source>
        <dbReference type="UniProtKB" id="P04925"/>
    </source>
</evidence>
<evidence type="ECO:0000255" key="5"/>
<evidence type="ECO:0000256" key="6">
    <source>
        <dbReference type="SAM" id="MobiDB-lite"/>
    </source>
</evidence>
<evidence type="ECO:0000305" key="7"/>
<feature type="signal peptide" evidence="1">
    <location>
        <begin position="1"/>
        <end position="22"/>
    </location>
</feature>
<feature type="chain" id="PRO_0000025645" description="Major prion protein">
    <location>
        <begin position="23"/>
        <end position="229"/>
    </location>
</feature>
<feature type="propeptide" id="PRO_0000025646" description="Removed in mature form" evidence="1">
    <location>
        <begin position="230"/>
        <end position="252"/>
    </location>
</feature>
<feature type="repeat" description="1">
    <location>
        <begin position="51"/>
        <end position="58"/>
    </location>
</feature>
<feature type="repeat" description="2">
    <location>
        <begin position="59"/>
        <end position="66"/>
    </location>
</feature>
<feature type="repeat" description="3">
    <location>
        <begin position="67"/>
        <end position="74"/>
    </location>
</feature>
<feature type="repeat" description="4">
    <location>
        <begin position="75"/>
        <end position="82"/>
    </location>
</feature>
<feature type="repeat" description="5">
    <location>
        <begin position="83"/>
        <end position="90"/>
    </location>
</feature>
<feature type="region of interest" description="Interaction with GRB2, ERI3 and SYN1" evidence="4">
    <location>
        <begin position="23"/>
        <end position="229"/>
    </location>
</feature>
<feature type="region of interest" description="Interaction with ADGRG6" evidence="4">
    <location>
        <begin position="23"/>
        <end position="38"/>
    </location>
</feature>
<feature type="region of interest" description="Disordered" evidence="6">
    <location>
        <begin position="26"/>
        <end position="106"/>
    </location>
</feature>
<feature type="region of interest" description="5 X 8 AA tandem repeats of P-H-G-G-G-W-G-Q">
    <location>
        <begin position="51"/>
        <end position="90"/>
    </location>
</feature>
<feature type="compositionally biased region" description="Gly residues" evidence="6">
    <location>
        <begin position="52"/>
        <end position="94"/>
    </location>
</feature>
<feature type="binding site" evidence="2">
    <location>
        <position position="60"/>
    </location>
    <ligand>
        <name>Cu(2+)</name>
        <dbReference type="ChEBI" id="CHEBI:29036"/>
        <label>1</label>
    </ligand>
</feature>
<feature type="binding site" evidence="2">
    <location>
        <position position="61"/>
    </location>
    <ligand>
        <name>Cu(2+)</name>
        <dbReference type="ChEBI" id="CHEBI:29036"/>
        <label>1</label>
    </ligand>
</feature>
<feature type="binding site" evidence="2">
    <location>
        <position position="62"/>
    </location>
    <ligand>
        <name>Cu(2+)</name>
        <dbReference type="ChEBI" id="CHEBI:29036"/>
        <label>1</label>
    </ligand>
</feature>
<feature type="binding site" evidence="2">
    <location>
        <position position="68"/>
    </location>
    <ligand>
        <name>Cu(2+)</name>
        <dbReference type="ChEBI" id="CHEBI:29036"/>
        <label>2</label>
    </ligand>
</feature>
<feature type="binding site" evidence="2">
    <location>
        <position position="69"/>
    </location>
    <ligand>
        <name>Cu(2+)</name>
        <dbReference type="ChEBI" id="CHEBI:29036"/>
        <label>2</label>
    </ligand>
</feature>
<feature type="binding site" evidence="2">
    <location>
        <position position="70"/>
    </location>
    <ligand>
        <name>Cu(2+)</name>
        <dbReference type="ChEBI" id="CHEBI:29036"/>
        <label>2</label>
    </ligand>
</feature>
<feature type="binding site" evidence="2">
    <location>
        <position position="76"/>
    </location>
    <ligand>
        <name>Cu(2+)</name>
        <dbReference type="ChEBI" id="CHEBI:29036"/>
        <label>3</label>
    </ligand>
</feature>
<feature type="binding site" evidence="2">
    <location>
        <position position="77"/>
    </location>
    <ligand>
        <name>Cu(2+)</name>
        <dbReference type="ChEBI" id="CHEBI:29036"/>
        <label>3</label>
    </ligand>
</feature>
<feature type="binding site" evidence="2">
    <location>
        <position position="78"/>
    </location>
    <ligand>
        <name>Cu(2+)</name>
        <dbReference type="ChEBI" id="CHEBI:29036"/>
        <label>3</label>
    </ligand>
</feature>
<feature type="binding site" evidence="2">
    <location>
        <position position="84"/>
    </location>
    <ligand>
        <name>Cu(2+)</name>
        <dbReference type="ChEBI" id="CHEBI:29036"/>
        <label>4</label>
    </ligand>
</feature>
<feature type="binding site" evidence="2">
    <location>
        <position position="85"/>
    </location>
    <ligand>
        <name>Cu(2+)</name>
        <dbReference type="ChEBI" id="CHEBI:29036"/>
        <label>4</label>
    </ligand>
</feature>
<feature type="binding site" evidence="2">
    <location>
        <position position="86"/>
    </location>
    <ligand>
        <name>Cu(2+)</name>
        <dbReference type="ChEBI" id="CHEBI:29036"/>
        <label>4</label>
    </ligand>
</feature>
<feature type="lipid moiety-binding region" description="GPI-anchor amidated serine" evidence="3">
    <location>
        <position position="229"/>
    </location>
</feature>
<feature type="glycosylation site" description="N-linked (GlcNAc...) asparagine" evidence="5">
    <location>
        <position position="180"/>
    </location>
</feature>
<feature type="glycosylation site" description="N-linked (GlcNAc...) asparagine" evidence="5">
    <location>
        <position position="196"/>
    </location>
</feature>
<feature type="disulfide bond" evidence="3">
    <location>
        <begin position="178"/>
        <end position="213"/>
    </location>
</feature>
<sequence>MANLGCWMLVLFVATWSDLGLCKKRPKPGGWNTGGSRYPGQGSPGGNLYPPQGGGWGQPHGGGWGQPHGGGWGQPHGGSWGQPHGGGWGQGGGTHNQWNKPSKPKTSMKHVAGAAAAGAVVGGLGGYMLGSAMSRPLIHFGNDYEDRYYRENMYRYPNQVYYRPVDQYSNQNNFVHDCVNITIKQHTVTTTTKGENFTETDVKMMERVVEQMCITQYERESQAYYQRGSSMVLFSSPPVILLISFLIFLIVG</sequence>
<name>PRIO_SAPAP</name>
<dbReference type="EMBL" id="U08295">
    <property type="protein sequence ID" value="AAC50084.1"/>
    <property type="molecule type" value="Genomic_DNA"/>
</dbReference>
<dbReference type="PIR" id="S53631">
    <property type="entry name" value="S53631"/>
</dbReference>
<dbReference type="SMR" id="P40249"/>
<dbReference type="GlyCosmos" id="P40249">
    <property type="glycosylation" value="2 sites, No reported glycans"/>
</dbReference>
<dbReference type="Proteomes" id="UP000504640">
    <property type="component" value="Unplaced"/>
</dbReference>
<dbReference type="GO" id="GO:0005794">
    <property type="term" value="C:Golgi apparatus"/>
    <property type="evidence" value="ECO:0007669"/>
    <property type="project" value="UniProtKB-SubCell"/>
</dbReference>
<dbReference type="GO" id="GO:0005886">
    <property type="term" value="C:plasma membrane"/>
    <property type="evidence" value="ECO:0007669"/>
    <property type="project" value="UniProtKB-SubCell"/>
</dbReference>
<dbReference type="GO" id="GO:0098552">
    <property type="term" value="C:side of membrane"/>
    <property type="evidence" value="ECO:0007669"/>
    <property type="project" value="UniProtKB-KW"/>
</dbReference>
<dbReference type="GO" id="GO:0005507">
    <property type="term" value="F:copper ion binding"/>
    <property type="evidence" value="ECO:0000250"/>
    <property type="project" value="UniProtKB"/>
</dbReference>
<dbReference type="GO" id="GO:0051260">
    <property type="term" value="P:protein homooligomerization"/>
    <property type="evidence" value="ECO:0007669"/>
    <property type="project" value="InterPro"/>
</dbReference>
<dbReference type="FunFam" id="1.10.790.10:FF:000001">
    <property type="entry name" value="Major prion protein"/>
    <property type="match status" value="1"/>
</dbReference>
<dbReference type="Gene3D" id="1.10.790.10">
    <property type="entry name" value="Prion/Doppel protein, beta-ribbon domain"/>
    <property type="match status" value="1"/>
</dbReference>
<dbReference type="InterPro" id="IPR000817">
    <property type="entry name" value="Prion"/>
</dbReference>
<dbReference type="InterPro" id="IPR036924">
    <property type="entry name" value="Prion/Doppel_b-ribbon_dom_sf"/>
</dbReference>
<dbReference type="InterPro" id="IPR022416">
    <property type="entry name" value="Prion/Doppel_prot_b-ribbon_dom"/>
</dbReference>
<dbReference type="InterPro" id="IPR020949">
    <property type="entry name" value="Prion_copper_b_octapeptide"/>
</dbReference>
<dbReference type="InterPro" id="IPR025860">
    <property type="entry name" value="Prion_N"/>
</dbReference>
<dbReference type="PANTHER" id="PTHR15506">
    <property type="entry name" value="DOPPEL PRION"/>
    <property type="match status" value="1"/>
</dbReference>
<dbReference type="PANTHER" id="PTHR15506:SF2">
    <property type="entry name" value="MAJOR PRION PROTEIN"/>
    <property type="match status" value="1"/>
</dbReference>
<dbReference type="Pfam" id="PF00377">
    <property type="entry name" value="Prion"/>
    <property type="match status" value="1"/>
</dbReference>
<dbReference type="Pfam" id="PF11587">
    <property type="entry name" value="Prion_bPrPp"/>
    <property type="match status" value="1"/>
</dbReference>
<dbReference type="Pfam" id="PF03991">
    <property type="entry name" value="Prion_octapep"/>
    <property type="match status" value="1"/>
</dbReference>
<dbReference type="PRINTS" id="PR00341">
    <property type="entry name" value="PRION"/>
</dbReference>
<dbReference type="SMART" id="SM00157">
    <property type="entry name" value="PRP"/>
    <property type="match status" value="1"/>
</dbReference>
<dbReference type="SUPFAM" id="SSF54098">
    <property type="entry name" value="Prion-like"/>
    <property type="match status" value="1"/>
</dbReference>
<dbReference type="PROSITE" id="PS00291">
    <property type="entry name" value="PRION_1"/>
    <property type="match status" value="1"/>
</dbReference>
<dbReference type="PROSITE" id="PS00706">
    <property type="entry name" value="PRION_2"/>
    <property type="match status" value="1"/>
</dbReference>
<reference key="1">
    <citation type="journal article" date="1995" name="J. Mol. Biol.">
        <title>Prion protein gene variation among primates.</title>
        <authorList>
            <person name="Schaetzl H.M."/>
            <person name="Da Costa M."/>
            <person name="Taylor L."/>
            <person name="Cohen F.E."/>
            <person name="Prusiner S.B."/>
        </authorList>
    </citation>
    <scope>NUCLEOTIDE SEQUENCE [GENOMIC DNA]</scope>
</reference>
<comment type="function">
    <text evidence="2 4">Its primary physiological function is unclear. May play a role in neuronal development and synaptic plasticity. May be required for neuronal myelin sheath maintenance. May promote myelin homeostasis through acting as an agonist for ADGRG6 receptor. May play a role in iron uptake and iron homeostasis. Soluble oligomers are toxic to cultured neuroblastoma cells and induce apoptosis (in vitro) (By similarity). Association with GPC1 (via its heparan sulfate chains) targets PRNP to lipid rafts. Also provides Cu(2+) or Zn(2+) for the ascorbate-mediated GPC1 deaminase degradation of its heparan sulfate side chains (By similarity).</text>
</comment>
<comment type="subunit">
    <text evidence="2 4">Monomer and homodimer. Has a tendency to aggregate into amyloid fibrils containing a cross-beta spine, formed by a steric zipper of superposed beta-strands. Soluble oligomers may represent an intermediate stage on the path to fibril formation. Copper binding may promote oligomerization. Interacts with GRB2, APP, ERI3/PRNPIP and SYN1 (By similarity). Mislocalized cytosolically exposed PrP interacts with MGRN1; this interaction alters MGRN1 subcellular location and causes lysosomal enlargement (By similarity). Interacts with APP. Interacts with KIAA1191 (By similarity). Interacts with ADGRG6 (By similarity).</text>
</comment>
<comment type="subcellular location">
    <subcellularLocation>
        <location evidence="2">Cell membrane</location>
        <topology evidence="2">Lipid-anchor</topology>
        <topology evidence="2">GPI-anchor</topology>
    </subcellularLocation>
    <subcellularLocation>
        <location evidence="4">Golgi apparatus</location>
    </subcellularLocation>
    <text evidence="2">Targeted to lipid rafts via association with the heparan sulfate chains of GPC1. Colocates, in the presence of Cu(2+), to vesicles in para- and perinuclear regions, where both proteins undergo internalization. Heparin displaces PRNP from lipid rafts and promotes endocytosis.</text>
</comment>
<comment type="domain">
    <text evidence="2">The normal, monomeric form has a mainly alpha-helical structure. The disease-associated, protease-resistant form forms amyloid fibrils containing a cross-beta spine, formed by a steric zipper of superposed beta-strands. Disease mutations may favor intermolecular contacts via short beta strands, and may thereby trigger oligomerization.</text>
</comment>
<comment type="domain">
    <text evidence="2">Contains an N-terminal region composed of octamer repeats. At low copper concentrations, the sidechains of His residues from three or four repeats contribute to the binding of a single copper ion. Alternatively, a copper ion can be bound by interaction with the sidechain and backbone amide nitrogen of a single His residue. The observed copper binding stoichiometry suggests that two repeat regions cooperate to stabilize the binding of a single copper ion. At higher copper concentrations, each octamer can bind one copper ion by interactions with the His sidechain and Gly backbone atoms. A mixture of binding types may occur, especially in the case of octamer repeat expansion. Copper binding may stabilize the conformation of this region and may promote oligomerization.</text>
</comment>
<comment type="disease">
    <text evidence="7">PrP is found in high quantity in the brain of humans and animals infected with the degenerative neurological diseases kuru, Creutzfeldt-Jakob disease (CJD), Gerstmann-Straussler syndrome (GSS), scrapie, bovine spongiform encephalopathy (BSE), transmissible mink encephalopathy (TME), etc.</text>
</comment>
<comment type="similarity">
    <text evidence="7">Belongs to the prion family.</text>
</comment>
<proteinExistence type="inferred from homology"/>
<gene>
    <name type="primary">PRNP</name>
    <name type="synonym">PRP</name>
</gene>
<protein>
    <recommendedName>
        <fullName>Major prion protein</fullName>
        <shortName>PrP</shortName>
    </recommendedName>
    <alternativeName>
        <fullName>PrP27-30</fullName>
    </alternativeName>
    <alternativeName>
        <fullName>PrP33-35C</fullName>
    </alternativeName>
    <cdAntigenName>CD230</cdAntigenName>
</protein>